<comment type="function">
    <text evidence="1">Part of the ACDS complex that catalyzes the reversible cleavage of acetyl-CoA, allowing autotrophic growth from CO(2). The alpha-epsilon subcomponent functions as a carbon monoxide dehydrogenase.</text>
</comment>
<comment type="catalytic activity">
    <reaction evidence="1">
        <text>CO + 2 oxidized [2Fe-2S]-[ferredoxin] + H2O = 2 reduced [2Fe-2S]-[ferredoxin] + CO2 + 2 H(+)</text>
        <dbReference type="Rhea" id="RHEA:21040"/>
        <dbReference type="Rhea" id="RHEA-COMP:10000"/>
        <dbReference type="Rhea" id="RHEA-COMP:10001"/>
        <dbReference type="ChEBI" id="CHEBI:15377"/>
        <dbReference type="ChEBI" id="CHEBI:15378"/>
        <dbReference type="ChEBI" id="CHEBI:16526"/>
        <dbReference type="ChEBI" id="CHEBI:17245"/>
        <dbReference type="ChEBI" id="CHEBI:33737"/>
        <dbReference type="ChEBI" id="CHEBI:33738"/>
        <dbReference type="EC" id="1.2.7.4"/>
    </reaction>
</comment>
<comment type="cofactor">
    <cofactor evidence="1">
        <name>[4Fe-4S] cluster</name>
        <dbReference type="ChEBI" id="CHEBI:49883"/>
    </cofactor>
    <text evidence="1">Binds 7 [4Fe-4S] clusters per heterotetramer.</text>
</comment>
<comment type="cofactor">
    <cofactor evidence="1">
        <name>[Ni-4Fe-4S] cluster</name>
        <dbReference type="ChEBI" id="CHEBI:47739"/>
    </cofactor>
    <text evidence="1">Binds 2 [Ni-4Fe-4S] clusters per heterotetramer.</text>
</comment>
<comment type="subunit">
    <text evidence="1">Heterotetramer of two alpha and two epsilon subunits. The ACDS complex is made up of alpha, epsilon, beta, gamma and delta subunits with a probable stoichiometry of (alpha(2)epsilon(2))(4)-beta(8)-(gamma(1)delta(1))(8).</text>
</comment>
<comment type="domain">
    <text evidence="1">Cluster B is an all-cysteinyl-liganded 4Fe-4S cluster; cluster C is a mixed Ni-Fe-S cluster which is the active site of CO oxidation. Cluster D is also an all-cysteinyl-liganded 4Fe-4S cluster that bridges the two subunits of the CODH dimer. Contains two additional 4Fe-4S clusters, dubbed E and F, that probably transport electrons from ferredoxin to the B cluster.</text>
</comment>
<comment type="similarity">
    <text evidence="1">Belongs to the Ni-containing carbon monoxide dehydrogenase family.</text>
</comment>
<evidence type="ECO:0000255" key="1">
    <source>
        <dbReference type="HAMAP-Rule" id="MF_01137"/>
    </source>
</evidence>
<dbReference type="EC" id="1.2.7.4" evidence="1"/>
<dbReference type="EMBL" id="AE000666">
    <property type="protein sequence ID" value="AAB86180.1"/>
    <property type="molecule type" value="Genomic_DNA"/>
</dbReference>
<dbReference type="PIR" id="E69095">
    <property type="entry name" value="E69095"/>
</dbReference>
<dbReference type="RefSeq" id="WP_010877316.1">
    <property type="nucleotide sequence ID" value="NC_000916.1"/>
</dbReference>
<dbReference type="SMR" id="O27743"/>
<dbReference type="FunCoup" id="O27743">
    <property type="interactions" value="66"/>
</dbReference>
<dbReference type="IntAct" id="O27743">
    <property type="interactions" value="2"/>
</dbReference>
<dbReference type="STRING" id="187420.MTH_1708"/>
<dbReference type="PaxDb" id="187420-MTH_1708"/>
<dbReference type="EnsemblBacteria" id="AAB86180">
    <property type="protein sequence ID" value="AAB86180"/>
    <property type="gene ID" value="MTH_1708"/>
</dbReference>
<dbReference type="GeneID" id="1470793"/>
<dbReference type="KEGG" id="mth:MTH_1708"/>
<dbReference type="PATRIC" id="fig|187420.15.peg.1669"/>
<dbReference type="HOGENOM" id="CLU_361186_0_0_2"/>
<dbReference type="InParanoid" id="O27743"/>
<dbReference type="Proteomes" id="UP000005223">
    <property type="component" value="Chromosome"/>
</dbReference>
<dbReference type="GO" id="GO:0051539">
    <property type="term" value="F:4 iron, 4 sulfur cluster binding"/>
    <property type="evidence" value="ECO:0007669"/>
    <property type="project" value="UniProtKB-KW"/>
</dbReference>
<dbReference type="GO" id="GO:0043885">
    <property type="term" value="F:anaerobic carbon-monoxide dehydrogenase activity"/>
    <property type="evidence" value="ECO:0007669"/>
    <property type="project" value="UniProtKB-UniRule"/>
</dbReference>
<dbReference type="GO" id="GO:0050418">
    <property type="term" value="F:hydroxylamine reductase activity"/>
    <property type="evidence" value="ECO:0007669"/>
    <property type="project" value="TreeGrafter"/>
</dbReference>
<dbReference type="GO" id="GO:0005506">
    <property type="term" value="F:iron ion binding"/>
    <property type="evidence" value="ECO:0007669"/>
    <property type="project" value="UniProtKB-UniRule"/>
</dbReference>
<dbReference type="GO" id="GO:0016151">
    <property type="term" value="F:nickel cation binding"/>
    <property type="evidence" value="ECO:0007669"/>
    <property type="project" value="UniProtKB-UniRule"/>
</dbReference>
<dbReference type="GO" id="GO:0004601">
    <property type="term" value="F:peroxidase activity"/>
    <property type="evidence" value="ECO:0007669"/>
    <property type="project" value="TreeGrafter"/>
</dbReference>
<dbReference type="GO" id="GO:0006084">
    <property type="term" value="P:acetyl-CoA metabolic process"/>
    <property type="evidence" value="ECO:0007669"/>
    <property type="project" value="InterPro"/>
</dbReference>
<dbReference type="GO" id="GO:0042542">
    <property type="term" value="P:response to hydrogen peroxide"/>
    <property type="evidence" value="ECO:0007669"/>
    <property type="project" value="TreeGrafter"/>
</dbReference>
<dbReference type="CDD" id="cd01916">
    <property type="entry name" value="ACS_1"/>
    <property type="match status" value="1"/>
</dbReference>
<dbReference type="Gene3D" id="3.30.70.20">
    <property type="match status" value="1"/>
</dbReference>
<dbReference type="Gene3D" id="3.40.50.2030">
    <property type="match status" value="2"/>
</dbReference>
<dbReference type="Gene3D" id="1.10.8.190">
    <property type="entry name" value="Carbon monoxide dehydrogenase alpha subunit. Chain M, domain 1"/>
    <property type="match status" value="1"/>
</dbReference>
<dbReference type="HAMAP" id="MF_01137">
    <property type="entry name" value="CdhA"/>
    <property type="match status" value="1"/>
</dbReference>
<dbReference type="InterPro" id="IPR017896">
    <property type="entry name" value="4Fe4S_Fe-S-bd"/>
</dbReference>
<dbReference type="InterPro" id="IPR017900">
    <property type="entry name" value="4Fe4S_Fe_S_CS"/>
</dbReference>
<dbReference type="InterPro" id="IPR004460">
    <property type="entry name" value="CdhA"/>
</dbReference>
<dbReference type="InterPro" id="IPR004137">
    <property type="entry name" value="HCP/CODH"/>
</dbReference>
<dbReference type="InterPro" id="IPR016099">
    <property type="entry name" value="Prismane-like_a/b-sand"/>
</dbReference>
<dbReference type="InterPro" id="IPR011254">
    <property type="entry name" value="Prismane-like_sf"/>
</dbReference>
<dbReference type="NCBIfam" id="TIGR00314">
    <property type="entry name" value="cdhA"/>
    <property type="match status" value="1"/>
</dbReference>
<dbReference type="PANTHER" id="PTHR30109:SF6">
    <property type="entry name" value="ACETYL-COA DECARBONYLASE_SYNTHASE COMPLEX SUBUNIT ALPHA"/>
    <property type="match status" value="1"/>
</dbReference>
<dbReference type="PANTHER" id="PTHR30109">
    <property type="entry name" value="HYDROXYLAMINE REDUCTASE"/>
    <property type="match status" value="1"/>
</dbReference>
<dbReference type="Pfam" id="PF13187">
    <property type="entry name" value="Fer4_9"/>
    <property type="match status" value="1"/>
</dbReference>
<dbReference type="Pfam" id="PF03063">
    <property type="entry name" value="Prismane"/>
    <property type="match status" value="2"/>
</dbReference>
<dbReference type="SUPFAM" id="SSF46548">
    <property type="entry name" value="alpha-helical ferredoxin"/>
    <property type="match status" value="1"/>
</dbReference>
<dbReference type="SUPFAM" id="SSF56821">
    <property type="entry name" value="Prismane protein-like"/>
    <property type="match status" value="1"/>
</dbReference>
<dbReference type="PROSITE" id="PS00198">
    <property type="entry name" value="4FE4S_FER_1"/>
    <property type="match status" value="2"/>
</dbReference>
<dbReference type="PROSITE" id="PS51379">
    <property type="entry name" value="4FE4S_FER_2"/>
    <property type="match status" value="2"/>
</dbReference>
<organism>
    <name type="scientific">Methanothermobacter thermautotrophicus (strain ATCC 29096 / DSM 1053 / JCM 10044 / NBRC 100330 / Delta H)</name>
    <name type="common">Methanobacterium thermoautotrophicum</name>
    <dbReference type="NCBI Taxonomy" id="187420"/>
    <lineage>
        <taxon>Archaea</taxon>
        <taxon>Methanobacteriati</taxon>
        <taxon>Methanobacteriota</taxon>
        <taxon>Methanomada group</taxon>
        <taxon>Methanobacteria</taxon>
        <taxon>Methanobacteriales</taxon>
        <taxon>Methanobacteriaceae</taxon>
        <taxon>Methanothermobacter</taxon>
    </lineage>
</organism>
<accession>O27743</accession>
<sequence length="780" mass="86068">MIDVAPESKKAKDLKGDFWDAKNIQISIGEIITEEKPPEEEVKGPKPRPHVTDLRSWDMKLLERYEPFYAPFCDMCCLCTYGKCELLGKKGACGIDAATQQARTVLLACLIGTAAHAGHARHLVDHLIERLGEDYKIDLGSNVDIEAPITRTVMGKRPATLGDLREVMDYAEEQMSHLLSACHTGQEGDSKDFESKAFHAGLMDDLTREVADLAQIVALDLPKGDEDAPLVELGFGTIDTEKPVVLCIGHNVLPGADIVDYLDENEMEDQVEVCGICCAAIDVTRYNEAAKVVGPLSKQLRFIRSGVADVIVVDEQCVRTDVLEEALKNRSAVIATTDKMCLGLPDMTDEDPDKIVNDLINGNIEGALILDPEKVGEVAVKTAMKLAPIRKSLKKLPDIDEIIELASECTDCGWCQRVCPNSLPVMDAVKKAADGDLSKLEEMAIEELCYTCGRCEQECERNIPIVSMVTKAGERRVKDEKYRIRAGRGPAQDVEIRRVGAPIVLGDIPGVVAFVGCSNYPEGGKDVALMAKEFLERNYIVVTTGCGAMSIGEYRDEDGQTLYEKYGGQFDAKGLVNMGSCVSNAHVSGAAIKIANIFAQKPLEGNFEEIADYILNRVGACGVAWGAYSQKAAAIATGVNRWGIPVVLGPHGSKYRRLFLGRADDEEKWKLKDLRTGEVIDGEPAPEHLLYAAENREEATVMIAKLCIRPTDTPKGRQMKLSNYIDLHRKYLGTIPDDIDRFIRTEKDIPIVYKRDVMKILEEKNWKPRELPKEPSLLER</sequence>
<name>ACDA_METTH</name>
<keyword id="KW-0004">4Fe-4S</keyword>
<keyword id="KW-0408">Iron</keyword>
<keyword id="KW-0411">Iron-sulfur</keyword>
<keyword id="KW-0479">Metal-binding</keyword>
<keyword id="KW-0533">Nickel</keyword>
<keyword id="KW-0560">Oxidoreductase</keyword>
<keyword id="KW-1185">Reference proteome</keyword>
<keyword id="KW-0677">Repeat</keyword>
<proteinExistence type="inferred from homology"/>
<feature type="chain" id="PRO_0000155085" description="Acetyl-CoA decarbonylase/synthase complex subunit alpha">
    <location>
        <begin position="1"/>
        <end position="780"/>
    </location>
</feature>
<feature type="domain" description="4Fe-4S ferredoxin-type 1" evidence="1">
    <location>
        <begin position="399"/>
        <end position="429"/>
    </location>
</feature>
<feature type="domain" description="4Fe-4S ferredoxin-type 2" evidence="1">
    <location>
        <begin position="440"/>
        <end position="469"/>
    </location>
</feature>
<feature type="binding site" evidence="1">
    <location>
        <position position="73"/>
    </location>
    <ligand>
        <name>[4Fe-4S] cluster</name>
        <dbReference type="ChEBI" id="CHEBI:49883"/>
        <label>1</label>
        <note>ligand shared between dimeric partners</note>
    </ligand>
</feature>
<feature type="binding site" evidence="1">
    <location>
        <position position="76"/>
    </location>
    <ligand>
        <name>[4Fe-4S] cluster</name>
        <dbReference type="ChEBI" id="CHEBI:49883"/>
        <label>2</label>
    </ligand>
</feature>
<feature type="binding site" evidence="1">
    <location>
        <position position="77"/>
    </location>
    <ligand>
        <name>[4Fe-4S] cluster</name>
        <dbReference type="ChEBI" id="CHEBI:49883"/>
        <label>1</label>
        <note>ligand shared between dimeric partners</note>
    </ligand>
</feature>
<feature type="binding site" evidence="1">
    <location>
        <position position="79"/>
    </location>
    <ligand>
        <name>[4Fe-4S] cluster</name>
        <dbReference type="ChEBI" id="CHEBI:49883"/>
        <label>2</label>
    </ligand>
</feature>
<feature type="binding site" evidence="1">
    <location>
        <position position="84"/>
    </location>
    <ligand>
        <name>[4Fe-4S] cluster</name>
        <dbReference type="ChEBI" id="CHEBI:49883"/>
        <label>2</label>
    </ligand>
</feature>
<feature type="binding site" evidence="1">
    <location>
        <position position="93"/>
    </location>
    <ligand>
        <name>[4Fe-4S] cluster</name>
        <dbReference type="ChEBI" id="CHEBI:49883"/>
        <label>2</label>
    </ligand>
</feature>
<feature type="binding site" evidence="1">
    <location>
        <position position="116"/>
    </location>
    <ligand>
        <name>CO</name>
        <dbReference type="ChEBI" id="CHEBI:17245"/>
    </ligand>
</feature>
<feature type="binding site" evidence="1">
    <location>
        <position position="250"/>
    </location>
    <ligand>
        <name>[Ni-4Fe-4S] cluster</name>
        <dbReference type="ChEBI" id="CHEBI:47739"/>
    </ligand>
</feature>
<feature type="binding site" evidence="1">
    <location>
        <position position="278"/>
    </location>
    <ligand>
        <name>[Ni-4Fe-4S] cluster</name>
        <dbReference type="ChEBI" id="CHEBI:47739"/>
    </ligand>
</feature>
<feature type="binding site" evidence="1">
    <location>
        <position position="317"/>
    </location>
    <ligand>
        <name>[Ni-4Fe-4S] cluster</name>
        <dbReference type="ChEBI" id="CHEBI:47739"/>
    </ligand>
</feature>
<feature type="binding site" evidence="1">
    <location>
        <position position="409"/>
    </location>
    <ligand>
        <name>[4Fe-4S] cluster</name>
        <dbReference type="ChEBI" id="CHEBI:49883"/>
        <label>3</label>
    </ligand>
</feature>
<feature type="binding site" evidence="1">
    <location>
        <position position="412"/>
    </location>
    <ligand>
        <name>[4Fe-4S] cluster</name>
        <dbReference type="ChEBI" id="CHEBI:49883"/>
        <label>3</label>
    </ligand>
</feature>
<feature type="binding site" evidence="1">
    <location>
        <position position="415"/>
    </location>
    <ligand>
        <name>[4Fe-4S] cluster</name>
        <dbReference type="ChEBI" id="CHEBI:49883"/>
        <label>3</label>
    </ligand>
</feature>
<feature type="binding site" evidence="1">
    <location>
        <position position="419"/>
    </location>
    <ligand>
        <name>[4Fe-4S] cluster</name>
        <dbReference type="ChEBI" id="CHEBI:49883"/>
        <label>4</label>
    </ligand>
</feature>
<feature type="binding site" evidence="1">
    <location>
        <position position="449"/>
    </location>
    <ligand>
        <name>[4Fe-4S] cluster</name>
        <dbReference type="ChEBI" id="CHEBI:49883"/>
        <label>4</label>
    </ligand>
</feature>
<feature type="binding site" evidence="1">
    <location>
        <position position="452"/>
    </location>
    <ligand>
        <name>[4Fe-4S] cluster</name>
        <dbReference type="ChEBI" id="CHEBI:49883"/>
        <label>4</label>
    </ligand>
</feature>
<feature type="binding site" evidence="1">
    <location>
        <position position="455"/>
    </location>
    <ligand>
        <name>[4Fe-4S] cluster</name>
        <dbReference type="ChEBI" id="CHEBI:49883"/>
        <label>4</label>
    </ligand>
</feature>
<feature type="binding site" evidence="1">
    <location>
        <position position="459"/>
    </location>
    <ligand>
        <name>[4Fe-4S] cluster</name>
        <dbReference type="ChEBI" id="CHEBI:49883"/>
        <label>3</label>
    </ligand>
</feature>
<feature type="binding site" evidence="1">
    <location>
        <position position="517"/>
    </location>
    <ligand>
        <name>[Ni-4Fe-4S] cluster</name>
        <dbReference type="ChEBI" id="CHEBI:47739"/>
    </ligand>
</feature>
<feature type="binding site" evidence="1">
    <location>
        <position position="546"/>
    </location>
    <ligand>
        <name>[Ni-4Fe-4S] cluster</name>
        <dbReference type="ChEBI" id="CHEBI:47739"/>
    </ligand>
</feature>
<feature type="binding site" evidence="1">
    <location>
        <position position="581"/>
    </location>
    <ligand>
        <name>[Ni-4Fe-4S] cluster</name>
        <dbReference type="ChEBI" id="CHEBI:47739"/>
    </ligand>
</feature>
<reference key="1">
    <citation type="journal article" date="1997" name="J. Bacteriol.">
        <title>Complete genome sequence of Methanobacterium thermoautotrophicum deltaH: functional analysis and comparative genomics.</title>
        <authorList>
            <person name="Smith D.R."/>
            <person name="Doucette-Stamm L.A."/>
            <person name="Deloughery C."/>
            <person name="Lee H.-M."/>
            <person name="Dubois J."/>
            <person name="Aldredge T."/>
            <person name="Bashirzadeh R."/>
            <person name="Blakely D."/>
            <person name="Cook R."/>
            <person name="Gilbert K."/>
            <person name="Harrison D."/>
            <person name="Hoang L."/>
            <person name="Keagle P."/>
            <person name="Lumm W."/>
            <person name="Pothier B."/>
            <person name="Qiu D."/>
            <person name="Spadafora R."/>
            <person name="Vicare R."/>
            <person name="Wang Y."/>
            <person name="Wierzbowski J."/>
            <person name="Gibson R."/>
            <person name="Jiwani N."/>
            <person name="Caruso A."/>
            <person name="Bush D."/>
            <person name="Safer H."/>
            <person name="Patwell D."/>
            <person name="Prabhakar S."/>
            <person name="McDougall S."/>
            <person name="Shimer G."/>
            <person name="Goyal A."/>
            <person name="Pietrovski S."/>
            <person name="Church G.M."/>
            <person name="Daniels C.J."/>
            <person name="Mao J.-I."/>
            <person name="Rice P."/>
            <person name="Noelling J."/>
            <person name="Reeve J.N."/>
        </authorList>
    </citation>
    <scope>NUCLEOTIDE SEQUENCE [LARGE SCALE GENOMIC DNA]</scope>
    <source>
        <strain>ATCC 29096 / DSM 1053 / JCM 10044 / NBRC 100330 / Delta H</strain>
    </source>
</reference>
<gene>
    <name evidence="1" type="primary">cdhA</name>
    <name type="ordered locus">MTH_1708</name>
</gene>
<protein>
    <recommendedName>
        <fullName evidence="1">Acetyl-CoA decarbonylase/synthase complex subunit alpha</fullName>
        <shortName evidence="1">ACDS complex subunit alpha</shortName>
        <ecNumber evidence="1">1.2.7.4</ecNumber>
    </recommendedName>
    <alternativeName>
        <fullName evidence="1">ACDS complex carbon monoxide dehydrogenase subunit alpha</fullName>
        <shortName evidence="1">ACDS CODH subunit alpha</shortName>
    </alternativeName>
</protein>